<accession>Q9K407</accession>
<comment type="function">
    <text evidence="1">Catalyzes the dephosphorylation of undecaprenyl diphosphate (UPP). Confers resistance to bacitracin.</text>
</comment>
<comment type="catalytic activity">
    <reaction evidence="1">
        <text>di-trans,octa-cis-undecaprenyl diphosphate + H2O = di-trans,octa-cis-undecaprenyl phosphate + phosphate + H(+)</text>
        <dbReference type="Rhea" id="RHEA:28094"/>
        <dbReference type="ChEBI" id="CHEBI:15377"/>
        <dbReference type="ChEBI" id="CHEBI:15378"/>
        <dbReference type="ChEBI" id="CHEBI:43474"/>
        <dbReference type="ChEBI" id="CHEBI:58405"/>
        <dbReference type="ChEBI" id="CHEBI:60392"/>
        <dbReference type="EC" id="3.6.1.27"/>
    </reaction>
</comment>
<comment type="subcellular location">
    <subcellularLocation>
        <location evidence="1">Cell membrane</location>
        <topology evidence="1">Multi-pass membrane protein</topology>
    </subcellularLocation>
</comment>
<comment type="miscellaneous">
    <text>Bacitracin is thought to be involved in the inhibition of peptidoglycan synthesis by sequestering undecaprenyl diphosphate, thereby reducing the pool of lipid carrier available.</text>
</comment>
<comment type="similarity">
    <text evidence="1">Belongs to the UppP family.</text>
</comment>
<keyword id="KW-0046">Antibiotic resistance</keyword>
<keyword id="KW-1003">Cell membrane</keyword>
<keyword id="KW-0133">Cell shape</keyword>
<keyword id="KW-0961">Cell wall biogenesis/degradation</keyword>
<keyword id="KW-0378">Hydrolase</keyword>
<keyword id="KW-0472">Membrane</keyword>
<keyword id="KW-0573">Peptidoglycan synthesis</keyword>
<keyword id="KW-1185">Reference proteome</keyword>
<keyword id="KW-0812">Transmembrane</keyword>
<keyword id="KW-1133">Transmembrane helix</keyword>
<evidence type="ECO:0000255" key="1">
    <source>
        <dbReference type="HAMAP-Rule" id="MF_01006"/>
    </source>
</evidence>
<dbReference type="EC" id="3.6.1.27" evidence="1"/>
<dbReference type="EMBL" id="AL939108">
    <property type="protein sequence ID" value="CAB95783.1"/>
    <property type="molecule type" value="Genomic_DNA"/>
</dbReference>
<dbReference type="RefSeq" id="NP_625611.1">
    <property type="nucleotide sequence ID" value="NC_003888.3"/>
</dbReference>
<dbReference type="RefSeq" id="WP_003977503.1">
    <property type="nucleotide sequence ID" value="NZ_VNID01000006.1"/>
</dbReference>
<dbReference type="SMR" id="Q9K407"/>
<dbReference type="FunCoup" id="Q9K407">
    <property type="interactions" value="7"/>
</dbReference>
<dbReference type="STRING" id="100226.gene:17758909"/>
<dbReference type="PaxDb" id="100226-SCO1326"/>
<dbReference type="KEGG" id="sco:SCO1326"/>
<dbReference type="PATRIC" id="fig|100226.15.peg.1330"/>
<dbReference type="eggNOG" id="COG1968">
    <property type="taxonomic scope" value="Bacteria"/>
</dbReference>
<dbReference type="HOGENOM" id="CLU_060296_1_0_11"/>
<dbReference type="InParanoid" id="Q9K407"/>
<dbReference type="OrthoDB" id="9808289at2"/>
<dbReference type="PhylomeDB" id="Q9K407"/>
<dbReference type="Proteomes" id="UP000001973">
    <property type="component" value="Chromosome"/>
</dbReference>
<dbReference type="GO" id="GO:0005886">
    <property type="term" value="C:plasma membrane"/>
    <property type="evidence" value="ECO:0000318"/>
    <property type="project" value="GO_Central"/>
</dbReference>
<dbReference type="GO" id="GO:0050380">
    <property type="term" value="F:undecaprenyl-diphosphatase activity"/>
    <property type="evidence" value="ECO:0000318"/>
    <property type="project" value="GO_Central"/>
</dbReference>
<dbReference type="GO" id="GO:0071555">
    <property type="term" value="P:cell wall organization"/>
    <property type="evidence" value="ECO:0007669"/>
    <property type="project" value="UniProtKB-KW"/>
</dbReference>
<dbReference type="GO" id="GO:0009252">
    <property type="term" value="P:peptidoglycan biosynthetic process"/>
    <property type="evidence" value="ECO:0007669"/>
    <property type="project" value="UniProtKB-KW"/>
</dbReference>
<dbReference type="GO" id="GO:0000270">
    <property type="term" value="P:peptidoglycan metabolic process"/>
    <property type="evidence" value="ECO:0000318"/>
    <property type="project" value="GO_Central"/>
</dbReference>
<dbReference type="GO" id="GO:0008360">
    <property type="term" value="P:regulation of cell shape"/>
    <property type="evidence" value="ECO:0007669"/>
    <property type="project" value="UniProtKB-KW"/>
</dbReference>
<dbReference type="GO" id="GO:0046677">
    <property type="term" value="P:response to antibiotic"/>
    <property type="evidence" value="ECO:0007669"/>
    <property type="project" value="UniProtKB-UniRule"/>
</dbReference>
<dbReference type="HAMAP" id="MF_01006">
    <property type="entry name" value="Undec_diphosphatase"/>
    <property type="match status" value="1"/>
</dbReference>
<dbReference type="InterPro" id="IPR003824">
    <property type="entry name" value="UppP"/>
</dbReference>
<dbReference type="NCBIfam" id="NF001392">
    <property type="entry name" value="PRK00281.2-1"/>
    <property type="match status" value="1"/>
</dbReference>
<dbReference type="NCBIfam" id="TIGR00753">
    <property type="entry name" value="undec_PP_bacA"/>
    <property type="match status" value="1"/>
</dbReference>
<dbReference type="PANTHER" id="PTHR30622">
    <property type="entry name" value="UNDECAPRENYL-DIPHOSPHATASE"/>
    <property type="match status" value="1"/>
</dbReference>
<dbReference type="PANTHER" id="PTHR30622:SF4">
    <property type="entry name" value="UNDECAPRENYL-DIPHOSPHATASE"/>
    <property type="match status" value="1"/>
</dbReference>
<dbReference type="Pfam" id="PF02673">
    <property type="entry name" value="BacA"/>
    <property type="match status" value="1"/>
</dbReference>
<sequence>MSWFESLVLGLVQGLTEFLPVSSSAHLRLTAAFSGWHDPGAAFTAITQIGTEAAVLIYFRKDIGRIIAAWTRSLTDKSMRHDPDARMGWLVIVGSIPIGVLGLTLKDQIEGPFRDLRITATMLIVVGVIIGIADRMAARDEKGGRHRAPQQRKELENLGVRDGLIYGLCQAAALIPGVSRSGATISGGLFMGYRREAAARYSFLLAIPAVLASGVFELKDAMESDHVSWGPTLFATVIAFATGYVVIAWFMKFISTKSFMPFVWYRIALGIVIIVLVSVGVLSPHAAESGG</sequence>
<protein>
    <recommendedName>
        <fullName evidence="1">Undecaprenyl-diphosphatase 2</fullName>
        <ecNumber evidence="1">3.6.1.27</ecNumber>
    </recommendedName>
    <alternativeName>
        <fullName evidence="1">Bacitracin resistance protein 2</fullName>
    </alternativeName>
    <alternativeName>
        <fullName evidence="1">Undecaprenyl pyrophosphate phosphatase 2</fullName>
    </alternativeName>
</protein>
<reference key="1">
    <citation type="journal article" date="2002" name="Nature">
        <title>Complete genome sequence of the model actinomycete Streptomyces coelicolor A3(2).</title>
        <authorList>
            <person name="Bentley S.D."/>
            <person name="Chater K.F."/>
            <person name="Cerdeno-Tarraga A.-M."/>
            <person name="Challis G.L."/>
            <person name="Thomson N.R."/>
            <person name="James K.D."/>
            <person name="Harris D.E."/>
            <person name="Quail M.A."/>
            <person name="Kieser H."/>
            <person name="Harper D."/>
            <person name="Bateman A."/>
            <person name="Brown S."/>
            <person name="Chandra G."/>
            <person name="Chen C.W."/>
            <person name="Collins M."/>
            <person name="Cronin A."/>
            <person name="Fraser A."/>
            <person name="Goble A."/>
            <person name="Hidalgo J."/>
            <person name="Hornsby T."/>
            <person name="Howarth S."/>
            <person name="Huang C.-H."/>
            <person name="Kieser T."/>
            <person name="Larke L."/>
            <person name="Murphy L.D."/>
            <person name="Oliver K."/>
            <person name="O'Neil S."/>
            <person name="Rabbinowitsch E."/>
            <person name="Rajandream M.A."/>
            <person name="Rutherford K.M."/>
            <person name="Rutter S."/>
            <person name="Seeger K."/>
            <person name="Saunders D."/>
            <person name="Sharp S."/>
            <person name="Squares R."/>
            <person name="Squares S."/>
            <person name="Taylor K."/>
            <person name="Warren T."/>
            <person name="Wietzorrek A."/>
            <person name="Woodward J.R."/>
            <person name="Barrell B.G."/>
            <person name="Parkhill J."/>
            <person name="Hopwood D.A."/>
        </authorList>
    </citation>
    <scope>NUCLEOTIDE SEQUENCE [LARGE SCALE GENOMIC DNA]</scope>
    <source>
        <strain>ATCC BAA-471 / A3(2) / M145</strain>
    </source>
</reference>
<organism>
    <name type="scientific">Streptomyces coelicolor (strain ATCC BAA-471 / A3(2) / M145)</name>
    <dbReference type="NCBI Taxonomy" id="100226"/>
    <lineage>
        <taxon>Bacteria</taxon>
        <taxon>Bacillati</taxon>
        <taxon>Actinomycetota</taxon>
        <taxon>Actinomycetes</taxon>
        <taxon>Kitasatosporales</taxon>
        <taxon>Streptomycetaceae</taxon>
        <taxon>Streptomyces</taxon>
        <taxon>Streptomyces albidoflavus group</taxon>
    </lineage>
</organism>
<name>UPPP2_STRCO</name>
<gene>
    <name evidence="1" type="primary">uppP2</name>
    <name type="synonym">bacA2</name>
    <name type="synonym">upk2</name>
    <name type="ordered locus">SCO1326</name>
    <name type="ORF">2SCG61.08</name>
</gene>
<proteinExistence type="inferred from homology"/>
<feature type="chain" id="PRO_0000151212" description="Undecaprenyl-diphosphatase 2">
    <location>
        <begin position="1"/>
        <end position="291"/>
    </location>
</feature>
<feature type="transmembrane region" description="Helical" evidence="1">
    <location>
        <begin position="39"/>
        <end position="59"/>
    </location>
</feature>
<feature type="transmembrane region" description="Helical" evidence="1">
    <location>
        <begin position="85"/>
        <end position="105"/>
    </location>
</feature>
<feature type="transmembrane region" description="Helical" evidence="1">
    <location>
        <begin position="118"/>
        <end position="138"/>
    </location>
</feature>
<feature type="transmembrane region" description="Helical" evidence="1">
    <location>
        <begin position="198"/>
        <end position="218"/>
    </location>
</feature>
<feature type="transmembrane region" description="Helical" evidence="1">
    <location>
        <begin position="231"/>
        <end position="251"/>
    </location>
</feature>
<feature type="transmembrane region" description="Helical" evidence="1">
    <location>
        <begin position="262"/>
        <end position="282"/>
    </location>
</feature>